<organism>
    <name type="scientific">Petrotoga mobilis (strain DSM 10674 / SJ95)</name>
    <dbReference type="NCBI Taxonomy" id="403833"/>
    <lineage>
        <taxon>Bacteria</taxon>
        <taxon>Thermotogati</taxon>
        <taxon>Thermotogota</taxon>
        <taxon>Thermotogae</taxon>
        <taxon>Petrotogales</taxon>
        <taxon>Petrotogaceae</taxon>
        <taxon>Petrotoga</taxon>
    </lineage>
</organism>
<name>COAD_PETMO</name>
<protein>
    <recommendedName>
        <fullName evidence="1">Phosphopantetheine adenylyltransferase</fullName>
        <ecNumber evidence="1">2.7.7.3</ecNumber>
    </recommendedName>
    <alternativeName>
        <fullName evidence="1">Dephospho-CoA pyrophosphorylase</fullName>
    </alternativeName>
    <alternativeName>
        <fullName evidence="1">Pantetheine-phosphate adenylyltransferase</fullName>
        <shortName evidence="1">PPAT</shortName>
    </alternativeName>
</protein>
<proteinExistence type="inferred from homology"/>
<reference key="1">
    <citation type="submission" date="2007-11" db="EMBL/GenBank/DDBJ databases">
        <title>Complete sequence of Petroga mobilis SJ95.</title>
        <authorList>
            <consortium name="US DOE Joint Genome Institute"/>
            <person name="Copeland A."/>
            <person name="Lucas S."/>
            <person name="Lapidus A."/>
            <person name="Barry K."/>
            <person name="Glavina del Rio T."/>
            <person name="Dalin E."/>
            <person name="Tice H."/>
            <person name="Pitluck S."/>
            <person name="Meincke L."/>
            <person name="Brettin T."/>
            <person name="Bruce D."/>
            <person name="Detter J.C."/>
            <person name="Han C."/>
            <person name="Kuske C.R."/>
            <person name="Schmutz J."/>
            <person name="Larimer F."/>
            <person name="Land M."/>
            <person name="Hauser L."/>
            <person name="Kyrpides N."/>
            <person name="Mikhailova N."/>
            <person name="Noll K."/>
            <person name="Richardson P."/>
        </authorList>
    </citation>
    <scope>NUCLEOTIDE SEQUENCE [LARGE SCALE GENOMIC DNA]</scope>
    <source>
        <strain>DSM 10674 / SJ95</strain>
    </source>
</reference>
<feature type="chain" id="PRO_1000123295" description="Phosphopantetheine adenylyltransferase">
    <location>
        <begin position="1"/>
        <end position="162"/>
    </location>
</feature>
<feature type="binding site" evidence="1">
    <location>
        <begin position="11"/>
        <end position="12"/>
    </location>
    <ligand>
        <name>ATP</name>
        <dbReference type="ChEBI" id="CHEBI:30616"/>
    </ligand>
</feature>
<feature type="binding site" evidence="1">
    <location>
        <position position="11"/>
    </location>
    <ligand>
        <name>substrate</name>
    </ligand>
</feature>
<feature type="binding site" evidence="1">
    <location>
        <position position="19"/>
    </location>
    <ligand>
        <name>ATP</name>
        <dbReference type="ChEBI" id="CHEBI:30616"/>
    </ligand>
</feature>
<feature type="binding site" evidence="1">
    <location>
        <position position="43"/>
    </location>
    <ligand>
        <name>substrate</name>
    </ligand>
</feature>
<feature type="binding site" evidence="1">
    <location>
        <position position="75"/>
    </location>
    <ligand>
        <name>substrate</name>
    </ligand>
</feature>
<feature type="binding site" evidence="1">
    <location>
        <position position="89"/>
    </location>
    <ligand>
        <name>substrate</name>
    </ligand>
</feature>
<feature type="binding site" evidence="1">
    <location>
        <begin position="90"/>
        <end position="92"/>
    </location>
    <ligand>
        <name>ATP</name>
        <dbReference type="ChEBI" id="CHEBI:30616"/>
    </ligand>
</feature>
<feature type="binding site" evidence="1">
    <location>
        <position position="100"/>
    </location>
    <ligand>
        <name>ATP</name>
        <dbReference type="ChEBI" id="CHEBI:30616"/>
    </ligand>
</feature>
<feature type="binding site" evidence="1">
    <location>
        <begin position="125"/>
        <end position="131"/>
    </location>
    <ligand>
        <name>ATP</name>
        <dbReference type="ChEBI" id="CHEBI:30616"/>
    </ligand>
</feature>
<feature type="site" description="Transition state stabilizer" evidence="1">
    <location>
        <position position="19"/>
    </location>
</feature>
<comment type="function">
    <text evidence="1">Reversibly transfers an adenylyl group from ATP to 4'-phosphopantetheine, yielding dephospho-CoA (dPCoA) and pyrophosphate.</text>
</comment>
<comment type="catalytic activity">
    <reaction evidence="1">
        <text>(R)-4'-phosphopantetheine + ATP + H(+) = 3'-dephospho-CoA + diphosphate</text>
        <dbReference type="Rhea" id="RHEA:19801"/>
        <dbReference type="ChEBI" id="CHEBI:15378"/>
        <dbReference type="ChEBI" id="CHEBI:30616"/>
        <dbReference type="ChEBI" id="CHEBI:33019"/>
        <dbReference type="ChEBI" id="CHEBI:57328"/>
        <dbReference type="ChEBI" id="CHEBI:61723"/>
        <dbReference type="EC" id="2.7.7.3"/>
    </reaction>
</comment>
<comment type="cofactor">
    <cofactor evidence="1">
        <name>Mg(2+)</name>
        <dbReference type="ChEBI" id="CHEBI:18420"/>
    </cofactor>
</comment>
<comment type="pathway">
    <text evidence="1">Cofactor biosynthesis; coenzyme A biosynthesis; CoA from (R)-pantothenate: step 4/5.</text>
</comment>
<comment type="subunit">
    <text evidence="1">Homohexamer.</text>
</comment>
<comment type="subcellular location">
    <subcellularLocation>
        <location evidence="1">Cytoplasm</location>
    </subcellularLocation>
</comment>
<comment type="similarity">
    <text evidence="1">Belongs to the bacterial CoaD family.</text>
</comment>
<evidence type="ECO:0000255" key="1">
    <source>
        <dbReference type="HAMAP-Rule" id="MF_00151"/>
    </source>
</evidence>
<accession>A9BIS4</accession>
<dbReference type="EC" id="2.7.7.3" evidence="1"/>
<dbReference type="EMBL" id="CP000879">
    <property type="protein sequence ID" value="ABX32412.1"/>
    <property type="molecule type" value="Genomic_DNA"/>
</dbReference>
<dbReference type="RefSeq" id="WP_012209509.1">
    <property type="nucleotide sequence ID" value="NC_010003.1"/>
</dbReference>
<dbReference type="SMR" id="A9BIS4"/>
<dbReference type="STRING" id="403833.Pmob_1719"/>
<dbReference type="KEGG" id="pmo:Pmob_1719"/>
<dbReference type="eggNOG" id="COG0669">
    <property type="taxonomic scope" value="Bacteria"/>
</dbReference>
<dbReference type="HOGENOM" id="CLU_100149_1_1_0"/>
<dbReference type="OrthoDB" id="9806661at2"/>
<dbReference type="UniPathway" id="UPA00241">
    <property type="reaction ID" value="UER00355"/>
</dbReference>
<dbReference type="Proteomes" id="UP000000789">
    <property type="component" value="Chromosome"/>
</dbReference>
<dbReference type="GO" id="GO:0005737">
    <property type="term" value="C:cytoplasm"/>
    <property type="evidence" value="ECO:0007669"/>
    <property type="project" value="UniProtKB-SubCell"/>
</dbReference>
<dbReference type="GO" id="GO:0005524">
    <property type="term" value="F:ATP binding"/>
    <property type="evidence" value="ECO:0007669"/>
    <property type="project" value="UniProtKB-KW"/>
</dbReference>
<dbReference type="GO" id="GO:0004595">
    <property type="term" value="F:pantetheine-phosphate adenylyltransferase activity"/>
    <property type="evidence" value="ECO:0007669"/>
    <property type="project" value="UniProtKB-UniRule"/>
</dbReference>
<dbReference type="GO" id="GO:0015937">
    <property type="term" value="P:coenzyme A biosynthetic process"/>
    <property type="evidence" value="ECO:0007669"/>
    <property type="project" value="UniProtKB-UniRule"/>
</dbReference>
<dbReference type="CDD" id="cd02163">
    <property type="entry name" value="PPAT"/>
    <property type="match status" value="1"/>
</dbReference>
<dbReference type="Gene3D" id="3.40.50.620">
    <property type="entry name" value="HUPs"/>
    <property type="match status" value="1"/>
</dbReference>
<dbReference type="HAMAP" id="MF_00151">
    <property type="entry name" value="PPAT_bact"/>
    <property type="match status" value="1"/>
</dbReference>
<dbReference type="InterPro" id="IPR004821">
    <property type="entry name" value="Cyt_trans-like"/>
</dbReference>
<dbReference type="InterPro" id="IPR001980">
    <property type="entry name" value="PPAT"/>
</dbReference>
<dbReference type="InterPro" id="IPR014729">
    <property type="entry name" value="Rossmann-like_a/b/a_fold"/>
</dbReference>
<dbReference type="NCBIfam" id="TIGR01510">
    <property type="entry name" value="coaD_prev_kdtB"/>
    <property type="match status" value="1"/>
</dbReference>
<dbReference type="NCBIfam" id="TIGR00125">
    <property type="entry name" value="cyt_tran_rel"/>
    <property type="match status" value="1"/>
</dbReference>
<dbReference type="PANTHER" id="PTHR21342">
    <property type="entry name" value="PHOSPHOPANTETHEINE ADENYLYLTRANSFERASE"/>
    <property type="match status" value="1"/>
</dbReference>
<dbReference type="PANTHER" id="PTHR21342:SF1">
    <property type="entry name" value="PHOSPHOPANTETHEINE ADENYLYLTRANSFERASE"/>
    <property type="match status" value="1"/>
</dbReference>
<dbReference type="Pfam" id="PF01467">
    <property type="entry name" value="CTP_transf_like"/>
    <property type="match status" value="1"/>
</dbReference>
<dbReference type="PRINTS" id="PR01020">
    <property type="entry name" value="LPSBIOSNTHSS"/>
</dbReference>
<dbReference type="SUPFAM" id="SSF52374">
    <property type="entry name" value="Nucleotidylyl transferase"/>
    <property type="match status" value="1"/>
</dbReference>
<sequence>MGIRDAAYPGSFDPITFGHVNIVKRSIERFDNLYVVVVNNPNKKYLFSLQERIEMVKKDLEDIPNVIVESFDGLLVNYLKEKKIYNLIRGLRAVSDYEYELQMANANHMLFPQLEIFFLMADTDFSYISSSMIKEIASYNGDVSKWVSKFVELKLKEKLLKK</sequence>
<keyword id="KW-0067">ATP-binding</keyword>
<keyword id="KW-0173">Coenzyme A biosynthesis</keyword>
<keyword id="KW-0963">Cytoplasm</keyword>
<keyword id="KW-0460">Magnesium</keyword>
<keyword id="KW-0547">Nucleotide-binding</keyword>
<keyword id="KW-0548">Nucleotidyltransferase</keyword>
<keyword id="KW-0808">Transferase</keyword>
<gene>
    <name evidence="1" type="primary">coaD</name>
    <name type="ordered locus">Pmob_1719</name>
</gene>